<keyword id="KW-0002">3D-structure</keyword>
<keyword id="KW-1003">Cell membrane</keyword>
<keyword id="KW-0157">Chromophore</keyword>
<keyword id="KW-0375">Hydrogen ion transport</keyword>
<keyword id="KW-0406">Ion transport</keyword>
<keyword id="KW-0472">Membrane</keyword>
<keyword id="KW-0600">Photoreceptor protein</keyword>
<keyword id="KW-0675">Receptor</keyword>
<keyword id="KW-0681">Retinal protein</keyword>
<keyword id="KW-0716">Sensory transduction</keyword>
<keyword id="KW-0812">Transmembrane</keyword>
<keyword id="KW-1133">Transmembrane helix</keyword>
<keyword id="KW-0813">Transport</keyword>
<protein>
    <recommendedName>
        <fullName evidence="4 5">Cruxrhodopsin-3</fullName>
        <shortName>COP-3</shortName>
        <shortName evidence="5">CR-3</shortName>
    </recommendedName>
</protein>
<accession>P94854</accession>
<organism>
    <name type="scientific">Haloarcula vallismortis</name>
    <name type="common">Halobacterium vallismortis</name>
    <dbReference type="NCBI Taxonomy" id="28442"/>
    <lineage>
        <taxon>Archaea</taxon>
        <taxon>Methanobacteriati</taxon>
        <taxon>Methanobacteriota</taxon>
        <taxon>Stenosarchaea group</taxon>
        <taxon>Halobacteria</taxon>
        <taxon>Halobacteriales</taxon>
        <taxon>Haloarculaceae</taxon>
        <taxon>Haloarcula</taxon>
    </lineage>
</organism>
<name>BACR_HALVA</name>
<comment type="function">
    <text evidence="2">Light-driven proton pump.</text>
</comment>
<comment type="subunit">
    <text evidence="3">Homotrimer. Binds bacterioruberin in the crevice between neighboring subunits.</text>
</comment>
<comment type="subcellular location">
    <subcellularLocation>
        <location evidence="3">Cell membrane</location>
        <topology evidence="3">Multi-pass membrane protein</topology>
    </subcellularLocation>
</comment>
<comment type="similarity">
    <text evidence="6">Belongs to the archaeal/bacterial/fungal opsin family.</text>
</comment>
<proteinExistence type="evidence at protein level"/>
<feature type="chain" id="PRO_0000196275" description="Cruxrhodopsin-3">
    <location>
        <begin position="1"/>
        <end position="250"/>
    </location>
</feature>
<feature type="topological domain" description="Extracellular" evidence="3">
    <location>
        <begin position="1"/>
        <end position="9"/>
    </location>
</feature>
<feature type="transmembrane region" description="Helical; Name=Helix A" evidence="3">
    <location>
        <begin position="10"/>
        <end position="27"/>
    </location>
</feature>
<feature type="topological domain" description="Cytoplasmic" evidence="3">
    <location>
        <begin position="28"/>
        <end position="41"/>
    </location>
</feature>
<feature type="transmembrane region" description="Helical; Name=Helix B" evidence="3">
    <location>
        <begin position="42"/>
        <end position="60"/>
    </location>
</feature>
<feature type="topological domain" description="Extracellular" evidence="3">
    <location>
        <begin position="61"/>
        <end position="77"/>
    </location>
</feature>
<feature type="transmembrane region" description="Helical; Name=Helix C" evidence="3">
    <location>
        <begin position="78"/>
        <end position="94"/>
    </location>
</feature>
<feature type="topological domain" description="Cytoplasmic" evidence="3">
    <location>
        <begin position="95"/>
        <end position="105"/>
    </location>
</feature>
<feature type="transmembrane region" description="Helical; Name=Helix D" evidence="3">
    <location>
        <begin position="106"/>
        <end position="125"/>
    </location>
</feature>
<feature type="topological domain" description="Extracellular" evidence="3">
    <location>
        <begin position="126"/>
        <end position="138"/>
    </location>
</feature>
<feature type="transmembrane region" description="Helical; Name=Helix E" evidence="3">
    <location>
        <begin position="139"/>
        <end position="158"/>
    </location>
</feature>
<feature type="topological domain" description="Cytoplasmic" evidence="3">
    <location>
        <begin position="159"/>
        <end position="176"/>
    </location>
</feature>
<feature type="transmembrane region" description="Helical; Name=Helix F" evidence="3">
    <location>
        <begin position="177"/>
        <end position="195"/>
    </location>
</feature>
<feature type="topological domain" description="Extracellular" evidence="3">
    <location>
        <begin position="196"/>
        <end position="207"/>
    </location>
</feature>
<feature type="transmembrane region" description="Helical; Name=Helix G" evidence="3">
    <location>
        <begin position="208"/>
        <end position="227"/>
    </location>
</feature>
<feature type="topological domain" description="Cytoplasmic" evidence="3">
    <location>
        <begin position="228"/>
        <end position="250"/>
    </location>
</feature>
<feature type="site" description="Primary proton acceptor" evidence="1">
    <location>
        <position position="83"/>
    </location>
</feature>
<feature type="modified residue" description="N6-(retinylidene)lysine" evidence="3 7 8">
    <location>
        <position position="220"/>
    </location>
</feature>
<feature type="helix" evidence="9">
    <location>
        <begin position="8"/>
        <end position="29"/>
    </location>
</feature>
<feature type="helix" evidence="9">
    <location>
        <begin position="35"/>
        <end position="59"/>
    </location>
</feature>
<feature type="turn" evidence="9">
    <location>
        <begin position="60"/>
        <end position="63"/>
    </location>
</feature>
<feature type="strand" evidence="9">
    <location>
        <begin position="64"/>
        <end position="69"/>
    </location>
</feature>
<feature type="strand" evidence="9">
    <location>
        <begin position="72"/>
        <end position="77"/>
    </location>
</feature>
<feature type="helix" evidence="9">
    <location>
        <begin position="79"/>
        <end position="99"/>
    </location>
</feature>
<feature type="helix" evidence="9">
    <location>
        <begin position="103"/>
        <end position="125"/>
    </location>
</feature>
<feature type="strand" evidence="9">
    <location>
        <begin position="130"/>
        <end position="132"/>
    </location>
</feature>
<feature type="helix" evidence="9">
    <location>
        <begin position="134"/>
        <end position="158"/>
    </location>
</feature>
<feature type="helix" evidence="9">
    <location>
        <begin position="161"/>
        <end position="165"/>
    </location>
</feature>
<feature type="helix" evidence="9">
    <location>
        <begin position="169"/>
        <end position="195"/>
    </location>
</feature>
<feature type="turn" evidence="9">
    <location>
        <begin position="197"/>
        <end position="200"/>
    </location>
</feature>
<feature type="helix" evidence="9">
    <location>
        <begin position="205"/>
        <end position="227"/>
    </location>
</feature>
<feature type="helix" evidence="9">
    <location>
        <begin position="231"/>
        <end position="235"/>
    </location>
</feature>
<feature type="helix" evidence="9">
    <location>
        <begin position="236"/>
        <end position="238"/>
    </location>
</feature>
<gene>
    <name type="primary">cop3</name>
</gene>
<dbReference type="EMBL" id="D31882">
    <property type="protein sequence ID" value="BAA06680.1"/>
    <property type="molecule type" value="Genomic_DNA"/>
</dbReference>
<dbReference type="RefSeq" id="WP_074654814.1">
    <property type="nucleotide sequence ID" value="NZ_FNOF01000001.1"/>
</dbReference>
<dbReference type="PDB" id="4JR8">
    <property type="method" value="X-ray"/>
    <property type="resolution" value="2.30 A"/>
    <property type="chains" value="A=1-250"/>
</dbReference>
<dbReference type="PDB" id="4L35">
    <property type="method" value="X-ray"/>
    <property type="resolution" value="2.10 A"/>
    <property type="chains" value="A=1-250"/>
</dbReference>
<dbReference type="PDBsum" id="4JR8"/>
<dbReference type="PDBsum" id="4L35"/>
<dbReference type="SMR" id="P94854"/>
<dbReference type="STRING" id="28442.SAMN05443574_101167"/>
<dbReference type="EvolutionaryTrace" id="P94854"/>
<dbReference type="GO" id="GO:0005886">
    <property type="term" value="C:plasma membrane"/>
    <property type="evidence" value="ECO:0007669"/>
    <property type="project" value="UniProtKB-SubCell"/>
</dbReference>
<dbReference type="GO" id="GO:0005216">
    <property type="term" value="F:monoatomic ion channel activity"/>
    <property type="evidence" value="ECO:0007669"/>
    <property type="project" value="InterPro"/>
</dbReference>
<dbReference type="GO" id="GO:0009881">
    <property type="term" value="F:photoreceptor activity"/>
    <property type="evidence" value="ECO:0007669"/>
    <property type="project" value="UniProtKB-KW"/>
</dbReference>
<dbReference type="GO" id="GO:0007602">
    <property type="term" value="P:phototransduction"/>
    <property type="evidence" value="ECO:0007669"/>
    <property type="project" value="UniProtKB-KW"/>
</dbReference>
<dbReference type="GO" id="GO:1902600">
    <property type="term" value="P:proton transmembrane transport"/>
    <property type="evidence" value="ECO:0007669"/>
    <property type="project" value="UniProtKB-KW"/>
</dbReference>
<dbReference type="CDD" id="cd15244">
    <property type="entry name" value="7tm_bacteriorhodopsin"/>
    <property type="match status" value="1"/>
</dbReference>
<dbReference type="Gene3D" id="1.20.1070.10">
    <property type="entry name" value="Rhodopsin 7-helix transmembrane proteins"/>
    <property type="match status" value="1"/>
</dbReference>
<dbReference type="InterPro" id="IPR001425">
    <property type="entry name" value="Arc/bac/fun_rhodopsins"/>
</dbReference>
<dbReference type="InterPro" id="IPR018229">
    <property type="entry name" value="Rhodopsin_retinal_BS"/>
</dbReference>
<dbReference type="PANTHER" id="PTHR28286">
    <property type="match status" value="1"/>
</dbReference>
<dbReference type="PANTHER" id="PTHR28286:SF2">
    <property type="entry name" value="BACTERIORHODOPSIN _OPSIN, NOPA (EUROFUNG)"/>
    <property type="match status" value="1"/>
</dbReference>
<dbReference type="Pfam" id="PF01036">
    <property type="entry name" value="Bac_rhodopsin"/>
    <property type="match status" value="1"/>
</dbReference>
<dbReference type="PRINTS" id="PR00251">
    <property type="entry name" value="BACTRLOPSIN"/>
</dbReference>
<dbReference type="SMART" id="SM01021">
    <property type="entry name" value="Bac_rhodopsin"/>
    <property type="match status" value="1"/>
</dbReference>
<dbReference type="SUPFAM" id="SSF81321">
    <property type="entry name" value="Family A G protein-coupled receptor-like"/>
    <property type="match status" value="1"/>
</dbReference>
<dbReference type="PROSITE" id="PS00950">
    <property type="entry name" value="BACTERIAL_OPSIN_1"/>
    <property type="match status" value="1"/>
</dbReference>
<dbReference type="PROSITE" id="PS00327">
    <property type="entry name" value="BACTERIAL_OPSIN_RET"/>
    <property type="match status" value="1"/>
</dbReference>
<evidence type="ECO:0000250" key="1">
    <source>
        <dbReference type="UniProtKB" id="P02945"/>
    </source>
</evidence>
<evidence type="ECO:0000250" key="2">
    <source>
        <dbReference type="UniProtKB" id="Q53496"/>
    </source>
</evidence>
<evidence type="ECO:0000269" key="3">
    <source>
    </source>
</evidence>
<evidence type="ECO:0000303" key="4">
    <source>
    </source>
</evidence>
<evidence type="ECO:0000303" key="5">
    <source>
    </source>
</evidence>
<evidence type="ECO:0000305" key="6"/>
<evidence type="ECO:0007744" key="7">
    <source>
        <dbReference type="PDB" id="4JR8"/>
    </source>
</evidence>
<evidence type="ECO:0007744" key="8">
    <source>
        <dbReference type="PDB" id="4L35"/>
    </source>
</evidence>
<evidence type="ECO:0007829" key="9">
    <source>
        <dbReference type="PDB" id="4L35"/>
    </source>
</evidence>
<reference key="1">
    <citation type="journal article" date="1996" name="Biochem. Biophys. Res. Commun.">
        <title>Novel bacterial rhodopsins from Haloarcula vallismortis.</title>
        <authorList>
            <person name="Kitajima T."/>
            <person name="Hirayama J."/>
            <person name="Ihara K."/>
            <person name="Sugiyama Y."/>
            <person name="Kamo N."/>
            <person name="Mukohata Y."/>
        </authorList>
    </citation>
    <scope>NUCLEOTIDE SEQUENCE [GENOMIC DNA]</scope>
    <source>
        <strain>ATCC 29715 / DSM 3756 / JCM 8877 / NBRC 14741 / NCIMB 2082</strain>
    </source>
</reference>
<reference evidence="7 8" key="2">
    <citation type="journal article" date="2014" name="PLoS ONE">
        <title>Crystal structure of Cruxrhodopsin-3 from Haloarcula vallismortis.</title>
        <authorList>
            <person name="Chan S.K."/>
            <person name="Kitajima-Ihara T."/>
            <person name="Fujii R."/>
            <person name="Gotoh T."/>
            <person name="Murakami M."/>
            <person name="Ihara K."/>
            <person name="Kouyama T."/>
        </authorList>
    </citation>
    <scope>X-RAY CRYSTALLOGRAPHY (2.10 ANGSTROMS) IN COMPLEX WITH ALL-TRANS-RETINAL AND BACTERIORUBERIN</scope>
    <scope>SUBCELLULAR LOCATION</scope>
    <scope>TOPOLOGY</scope>
    <scope>SUBUNIT</scope>
</reference>
<sequence length="250" mass="26852">MPAPEGEAIWLWLGTAGMFLGMLYFIARGWGETDSRRQKFYIATILITAIAFVNYLAMALGFGLTIVEIAGEQRPIYWARYSDWLFTTPLLLYDLGLLAGADRNTISSLVSLDVLMIGTGLVATLSAGSGVLSAGAERLVWWGISTAFLLVLLYFLFSSLSGRVADLPSDTRSTFKTLRNLVTVVWLVYPVWWLVGTEGIGLVGIGIETAGFMVIDLVAKVGFGIILLRSHGVLDGAAETTGAGATATAD</sequence>